<dbReference type="EC" id="3.2.1.85" evidence="1"/>
<dbReference type="EMBL" id="AJ938182">
    <property type="protein sequence ID" value="CAI81759.1"/>
    <property type="molecule type" value="Genomic_DNA"/>
</dbReference>
<dbReference type="RefSeq" id="WP_000169224.1">
    <property type="nucleotide sequence ID" value="NC_007622.1"/>
</dbReference>
<dbReference type="SMR" id="Q2YYJ9"/>
<dbReference type="CAZy" id="GH1">
    <property type="family name" value="Glycoside Hydrolase Family 1"/>
</dbReference>
<dbReference type="KEGG" id="sab:SAB2070c"/>
<dbReference type="HOGENOM" id="CLU_001859_1_3_9"/>
<dbReference type="UniPathway" id="UPA00542">
    <property type="reaction ID" value="UER00605"/>
</dbReference>
<dbReference type="GO" id="GO:0005829">
    <property type="term" value="C:cytosol"/>
    <property type="evidence" value="ECO:0007669"/>
    <property type="project" value="TreeGrafter"/>
</dbReference>
<dbReference type="GO" id="GO:0033920">
    <property type="term" value="F:6-phospho-beta-galactosidase activity"/>
    <property type="evidence" value="ECO:0007669"/>
    <property type="project" value="UniProtKB-UniRule"/>
</dbReference>
<dbReference type="GO" id="GO:0008422">
    <property type="term" value="F:beta-glucosidase activity"/>
    <property type="evidence" value="ECO:0007669"/>
    <property type="project" value="TreeGrafter"/>
</dbReference>
<dbReference type="GO" id="GO:0019512">
    <property type="term" value="P:lactose catabolic process via tagatose-6-phosphate"/>
    <property type="evidence" value="ECO:0007669"/>
    <property type="project" value="InterPro"/>
</dbReference>
<dbReference type="FunFam" id="3.20.20.80:FF:000004">
    <property type="entry name" value="Beta-glucosidase 6-phospho-beta-glucosidase"/>
    <property type="match status" value="1"/>
</dbReference>
<dbReference type="Gene3D" id="3.20.20.80">
    <property type="entry name" value="Glycosidases"/>
    <property type="match status" value="1"/>
</dbReference>
<dbReference type="HAMAP" id="MF_01574">
    <property type="entry name" value="LacG"/>
    <property type="match status" value="1"/>
</dbReference>
<dbReference type="InterPro" id="IPR005928">
    <property type="entry name" value="6P-beta-galactosidase"/>
</dbReference>
<dbReference type="InterPro" id="IPR001360">
    <property type="entry name" value="Glyco_hydro_1"/>
</dbReference>
<dbReference type="InterPro" id="IPR018120">
    <property type="entry name" value="Glyco_hydro_1_AS"/>
</dbReference>
<dbReference type="InterPro" id="IPR033132">
    <property type="entry name" value="Glyco_hydro_1_N_CS"/>
</dbReference>
<dbReference type="InterPro" id="IPR017853">
    <property type="entry name" value="Glycoside_hydrolase_SF"/>
</dbReference>
<dbReference type="NCBIfam" id="TIGR01233">
    <property type="entry name" value="lacG"/>
    <property type="match status" value="1"/>
</dbReference>
<dbReference type="NCBIfam" id="NF010036">
    <property type="entry name" value="PRK13511.1"/>
    <property type="match status" value="1"/>
</dbReference>
<dbReference type="PANTHER" id="PTHR10353">
    <property type="entry name" value="GLYCOSYL HYDROLASE"/>
    <property type="match status" value="1"/>
</dbReference>
<dbReference type="PANTHER" id="PTHR10353:SF36">
    <property type="entry name" value="LP05116P"/>
    <property type="match status" value="1"/>
</dbReference>
<dbReference type="Pfam" id="PF00232">
    <property type="entry name" value="Glyco_hydro_1"/>
    <property type="match status" value="1"/>
</dbReference>
<dbReference type="PRINTS" id="PR00131">
    <property type="entry name" value="GLHYDRLASE1"/>
</dbReference>
<dbReference type="SUPFAM" id="SSF51445">
    <property type="entry name" value="(Trans)glycosidases"/>
    <property type="match status" value="1"/>
</dbReference>
<dbReference type="PROSITE" id="PS00572">
    <property type="entry name" value="GLYCOSYL_HYDROL_F1_1"/>
    <property type="match status" value="1"/>
</dbReference>
<dbReference type="PROSITE" id="PS00653">
    <property type="entry name" value="GLYCOSYL_HYDROL_F1_2"/>
    <property type="match status" value="1"/>
</dbReference>
<feature type="chain" id="PRO_0000260724" description="6-phospho-beta-galactosidase">
    <location>
        <begin position="1"/>
        <end position="470"/>
    </location>
</feature>
<feature type="active site" description="Proton donor" evidence="1">
    <location>
        <position position="160"/>
    </location>
</feature>
<feature type="active site" description="Nucleophile" evidence="1">
    <location>
        <position position="375"/>
    </location>
</feature>
<feature type="binding site" evidence="1">
    <location>
        <position position="19"/>
    </location>
    <ligand>
        <name>D-galactose 6-phosphate</name>
        <dbReference type="ChEBI" id="CHEBI:91004"/>
    </ligand>
</feature>
<feature type="binding site" evidence="1">
    <location>
        <position position="116"/>
    </location>
    <ligand>
        <name>D-galactose 6-phosphate</name>
        <dbReference type="ChEBI" id="CHEBI:91004"/>
    </ligand>
</feature>
<feature type="binding site" evidence="1">
    <location>
        <position position="159"/>
    </location>
    <ligand>
        <name>D-galactose 6-phosphate</name>
        <dbReference type="ChEBI" id="CHEBI:91004"/>
    </ligand>
</feature>
<feature type="binding site" evidence="1">
    <location>
        <position position="160"/>
    </location>
    <ligand>
        <name>D-galactose 6-phosphate</name>
        <dbReference type="ChEBI" id="CHEBI:91004"/>
    </ligand>
</feature>
<feature type="binding site" evidence="1">
    <location>
        <position position="297"/>
    </location>
    <ligand>
        <name>D-galactose 6-phosphate</name>
        <dbReference type="ChEBI" id="CHEBI:91004"/>
    </ligand>
</feature>
<feature type="binding site" evidence="1">
    <location>
        <position position="430"/>
    </location>
    <ligand>
        <name>D-galactose 6-phosphate</name>
        <dbReference type="ChEBI" id="CHEBI:91004"/>
    </ligand>
</feature>
<feature type="binding site" evidence="1">
    <location>
        <position position="431"/>
    </location>
    <ligand>
        <name>D-galactose 6-phosphate</name>
        <dbReference type="ChEBI" id="CHEBI:91004"/>
    </ligand>
</feature>
<feature type="binding site" evidence="1">
    <location>
        <position position="437"/>
    </location>
    <ligand>
        <name>D-galactose 6-phosphate</name>
        <dbReference type="ChEBI" id="CHEBI:91004"/>
    </ligand>
</feature>
<feature type="binding site" evidence="1">
    <location>
        <position position="439"/>
    </location>
    <ligand>
        <name>D-galactose 6-phosphate</name>
        <dbReference type="ChEBI" id="CHEBI:91004"/>
    </ligand>
</feature>
<proteinExistence type="inferred from homology"/>
<keyword id="KW-0326">Glycosidase</keyword>
<keyword id="KW-0378">Hydrolase</keyword>
<gene>
    <name evidence="1" type="primary">lacG</name>
    <name type="ordered locus">SAB2070c</name>
</gene>
<organism>
    <name type="scientific">Staphylococcus aureus (strain bovine RF122 / ET3-1)</name>
    <dbReference type="NCBI Taxonomy" id="273036"/>
    <lineage>
        <taxon>Bacteria</taxon>
        <taxon>Bacillati</taxon>
        <taxon>Bacillota</taxon>
        <taxon>Bacilli</taxon>
        <taxon>Bacillales</taxon>
        <taxon>Staphylococcaceae</taxon>
        <taxon>Staphylococcus</taxon>
    </lineage>
</organism>
<sequence length="470" mass="54565">MTKTLPEDFIFGGATAAYQAEGATNTDGKGRVAWDTYLEENYWYTAEPASDFYNRYPVDLELSEKFGVNGIRISIAWSRIFPNGYGEVNPKGVEYYHKLFAECHKRHVEPFVTLHHFDTPEVLHKDGDFLNRKTIDYFVDYAEYCFKEFPEVKYWTTFNEIGPIGDGQYLVGKFPPGIKYDFEKVFQSHHNMMVAHARAVKLFKDGGYQGEIGVVHALPTKYPFDPSNPEDVRAAELEDIIHNKFILDATYLGKYSRETMEGVQHILSVNGGKLNITDEDYAILDAAKDLNDFLGINYYMSDWMRGYDGESEITHNATGDKGGSKYQLKGVGQREFDVDVPRTDWDWMIYPQGLYDQIMRVVKDYPNYHKIYITENGLGYKDEFIESEKTVHDDARIDYVRQHLNVIADAIKDGANVKGYFIWSLMDVFSWSNGYEKRYGLFYVDFETQERYPKKSAYWYKELAETKEIK</sequence>
<comment type="catalytic activity">
    <reaction evidence="1">
        <text>a 6-phospho-beta-D-galactoside + H2O = D-galactose 6-phosphate + an alcohol</text>
        <dbReference type="Rhea" id="RHEA:24568"/>
        <dbReference type="ChEBI" id="CHEBI:15377"/>
        <dbReference type="ChEBI" id="CHEBI:30879"/>
        <dbReference type="ChEBI" id="CHEBI:58534"/>
        <dbReference type="ChEBI" id="CHEBI:91004"/>
        <dbReference type="EC" id="3.2.1.85"/>
    </reaction>
</comment>
<comment type="pathway">
    <text evidence="1">Carbohydrate metabolism; lactose degradation; D-galactose 6-phosphate and beta-D-glucose from lactose 6-phosphate: step 1/1.</text>
</comment>
<comment type="similarity">
    <text evidence="1">Belongs to the glycosyl hydrolase 1 family.</text>
</comment>
<name>LACG_STAAB</name>
<reference key="1">
    <citation type="journal article" date="2007" name="PLoS ONE">
        <title>Molecular correlates of host specialization in Staphylococcus aureus.</title>
        <authorList>
            <person name="Herron-Olson L."/>
            <person name="Fitzgerald J.R."/>
            <person name="Musser J.M."/>
            <person name="Kapur V."/>
        </authorList>
    </citation>
    <scope>NUCLEOTIDE SEQUENCE [LARGE SCALE GENOMIC DNA]</scope>
    <source>
        <strain>bovine RF122 / ET3-1</strain>
    </source>
</reference>
<evidence type="ECO:0000255" key="1">
    <source>
        <dbReference type="HAMAP-Rule" id="MF_01574"/>
    </source>
</evidence>
<accession>Q2YYJ9</accession>
<protein>
    <recommendedName>
        <fullName evidence="1">6-phospho-beta-galactosidase</fullName>
        <ecNumber evidence="1">3.2.1.85</ecNumber>
    </recommendedName>
    <alternativeName>
        <fullName evidence="1">Beta-D-phosphogalactoside galactohydrolase</fullName>
        <shortName evidence="1">PGALase</shortName>
    </alternativeName>
    <alternativeName>
        <fullName evidence="1">P-beta-Gal</fullName>
        <shortName evidence="1">PBG</shortName>
    </alternativeName>
</protein>